<dbReference type="EMBL" id="S55765">
    <property type="protein sequence ID" value="AAB19758.1"/>
    <property type="molecule type" value="mRNA"/>
</dbReference>
<dbReference type="EMBL" id="M74544">
    <property type="protein sequence ID" value="AAA49030.1"/>
    <property type="molecule type" value="mRNA"/>
</dbReference>
<dbReference type="PIR" id="I51192">
    <property type="entry name" value="I51192"/>
</dbReference>
<dbReference type="SMR" id="Q91974"/>
<dbReference type="FunCoup" id="Q91974">
    <property type="interactions" value="889"/>
</dbReference>
<dbReference type="IntAct" id="Q91974">
    <property type="interactions" value="1"/>
</dbReference>
<dbReference type="STRING" id="9031.ENSGALP00000041417"/>
<dbReference type="PaxDb" id="9031-ENSGALP00000041417"/>
<dbReference type="VEuPathDB" id="HostDB:geneid_396093"/>
<dbReference type="eggNOG" id="KOG0504">
    <property type="taxonomic scope" value="Eukaryota"/>
</dbReference>
<dbReference type="InParanoid" id="Q91974"/>
<dbReference type="OrthoDB" id="20727at2759"/>
<dbReference type="PhylomeDB" id="Q91974"/>
<dbReference type="Reactome" id="R-GGA-1227892">
    <property type="pathway name" value="TRAF6 mediated NF-kB activation"/>
</dbReference>
<dbReference type="Reactome" id="R-GGA-434001">
    <property type="pathway name" value="TAK1 activates NFkB by phosphorylation and activation of IKKs complex"/>
</dbReference>
<dbReference type="Reactome" id="R-GGA-434131">
    <property type="pathway name" value="NFkB activation mediated by RIP1 complexed with activated TLR3"/>
</dbReference>
<dbReference type="PRO" id="PR:Q91974"/>
<dbReference type="Proteomes" id="UP000000539">
    <property type="component" value="Unassembled WGS sequence"/>
</dbReference>
<dbReference type="GO" id="GO:0005829">
    <property type="term" value="C:cytosol"/>
    <property type="evidence" value="ECO:0000318"/>
    <property type="project" value="GO_Central"/>
</dbReference>
<dbReference type="GO" id="GO:0005634">
    <property type="term" value="C:nucleus"/>
    <property type="evidence" value="ECO:0007669"/>
    <property type="project" value="UniProtKB-SubCell"/>
</dbReference>
<dbReference type="GO" id="GO:0051059">
    <property type="term" value="F:NF-kappaB binding"/>
    <property type="evidence" value="ECO:0000250"/>
    <property type="project" value="UniProtKB"/>
</dbReference>
<dbReference type="GO" id="GO:0140311">
    <property type="term" value="F:protein sequestering activity"/>
    <property type="evidence" value="ECO:0000250"/>
    <property type="project" value="UniProtKB"/>
</dbReference>
<dbReference type="GO" id="GO:0043124">
    <property type="term" value="P:negative regulation of canonical NF-kappaB signal transduction"/>
    <property type="evidence" value="ECO:0000318"/>
    <property type="project" value="GO_Central"/>
</dbReference>
<dbReference type="GO" id="GO:0048145">
    <property type="term" value="P:regulation of fibroblast proliferation"/>
    <property type="evidence" value="ECO:0000303"/>
    <property type="project" value="UniProtKB"/>
</dbReference>
<dbReference type="FunFam" id="1.25.40.20:FF:000124">
    <property type="entry name" value="NF-kappa-B inhibitor alpha isoform X2"/>
    <property type="match status" value="1"/>
</dbReference>
<dbReference type="Gene3D" id="1.25.40.20">
    <property type="entry name" value="Ankyrin repeat-containing domain"/>
    <property type="match status" value="1"/>
</dbReference>
<dbReference type="InterPro" id="IPR002110">
    <property type="entry name" value="Ankyrin_rpt"/>
</dbReference>
<dbReference type="InterPro" id="IPR036770">
    <property type="entry name" value="Ankyrin_rpt-contain_sf"/>
</dbReference>
<dbReference type="InterPro" id="IPR051070">
    <property type="entry name" value="NF-kappa-B_inhibitor"/>
</dbReference>
<dbReference type="PANTHER" id="PTHR46680">
    <property type="entry name" value="NF-KAPPA-B INHIBITOR ALPHA"/>
    <property type="match status" value="1"/>
</dbReference>
<dbReference type="PANTHER" id="PTHR46680:SF1">
    <property type="entry name" value="NF-KAPPA-B INHIBITOR ALPHA"/>
    <property type="match status" value="1"/>
</dbReference>
<dbReference type="Pfam" id="PF00023">
    <property type="entry name" value="Ank"/>
    <property type="match status" value="1"/>
</dbReference>
<dbReference type="Pfam" id="PF12796">
    <property type="entry name" value="Ank_2"/>
    <property type="match status" value="1"/>
</dbReference>
<dbReference type="PRINTS" id="PR01415">
    <property type="entry name" value="ANKYRIN"/>
</dbReference>
<dbReference type="SMART" id="SM00248">
    <property type="entry name" value="ANK"/>
    <property type="match status" value="5"/>
</dbReference>
<dbReference type="SUPFAM" id="SSF48403">
    <property type="entry name" value="Ankyrin repeat"/>
    <property type="match status" value="1"/>
</dbReference>
<dbReference type="PROSITE" id="PS50297">
    <property type="entry name" value="ANK_REP_REGION"/>
    <property type="match status" value="1"/>
</dbReference>
<dbReference type="PROSITE" id="PS50088">
    <property type="entry name" value="ANK_REPEAT"/>
    <property type="match status" value="4"/>
</dbReference>
<protein>
    <recommendedName>
        <fullName>NF-kappa-B inhibitor alpha</fullName>
    </recommendedName>
    <alternativeName>
        <fullName>I-kappa-B-alpha</fullName>
        <shortName>IkB-alpha</shortName>
        <shortName>IkappaBalpha</shortName>
    </alternativeName>
    <alternativeName>
        <fullName evidence="4">REL-associated protein pp40</fullName>
    </alternativeName>
</protein>
<proteinExistence type="evidence at transcript level"/>
<name>IKBA_CHICK</name>
<keyword id="KW-0040">ANK repeat</keyword>
<keyword id="KW-0963">Cytoplasm</keyword>
<keyword id="KW-1017">Isopeptide bond</keyword>
<keyword id="KW-0539">Nucleus</keyword>
<keyword id="KW-0597">Phosphoprotein</keyword>
<keyword id="KW-1185">Reference proteome</keyword>
<keyword id="KW-0677">Repeat</keyword>
<keyword id="KW-0832">Ubl conjugation</keyword>
<evidence type="ECO:0000250" key="1">
    <source>
        <dbReference type="UniProtKB" id="P25963"/>
    </source>
</evidence>
<evidence type="ECO:0000256" key="2">
    <source>
        <dbReference type="SAM" id="MobiDB-lite"/>
    </source>
</evidence>
<evidence type="ECO:0000269" key="3">
    <source>
    </source>
</evidence>
<evidence type="ECO:0000303" key="4">
    <source>
    </source>
</evidence>
<evidence type="ECO:0000305" key="5"/>
<feature type="chain" id="PRO_0000067003" description="NF-kappa-B inhibitor alpha">
    <location>
        <begin position="1"/>
        <end position="318"/>
    </location>
</feature>
<feature type="repeat" description="ANK 1">
    <location>
        <begin position="114"/>
        <end position="143"/>
    </location>
</feature>
<feature type="repeat" description="ANK 2">
    <location>
        <begin position="147"/>
        <end position="176"/>
    </location>
</feature>
<feature type="repeat" description="ANK 3">
    <location>
        <begin position="186"/>
        <end position="215"/>
    </location>
</feature>
<feature type="repeat" description="ANK 4">
    <location>
        <begin position="220"/>
        <end position="249"/>
    </location>
</feature>
<feature type="region of interest" description="Disordered" evidence="2">
    <location>
        <begin position="1"/>
        <end position="44"/>
    </location>
</feature>
<feature type="compositionally biased region" description="Basic and acidic residues" evidence="2">
    <location>
        <begin position="17"/>
        <end position="44"/>
    </location>
</feature>
<feature type="modified residue" description="Phosphoserine; by IKKA and IKKB" evidence="1">
    <location>
        <position position="36"/>
    </location>
</feature>
<feature type="modified residue" description="Phosphoserine; by IKKA, IKKB and IKKE" evidence="1">
    <location>
        <position position="40"/>
    </location>
</feature>
<feature type="modified residue" description="Phosphotyrosine; by Tyr-kinases" evidence="1">
    <location>
        <position position="46"/>
    </location>
</feature>
<feature type="cross-link" description="Glycyl lysine isopeptide (Lys-Gly) (interchain with G-Cter in ubiquitin)" evidence="1">
    <location>
        <position position="21"/>
    </location>
</feature>
<comment type="function">
    <text evidence="1 3">Inhibits the activity of dimeric NF-kappa-B/REL complexes by trapping REL (RELA/p65 and NFKB1/p50) dimers in the cytoplasm by masking their nuclear localization signals (PubMed:1891714). On cellular stimulation by immune and pro-inflammatory responses, becomes phosphorylated promoting ubiquitination and degradation, enabling the dimeric RELA to translocate to the nucleus and activate transcription (By similarity).</text>
</comment>
<comment type="subcellular location">
    <subcellularLocation>
        <location evidence="1">Cytoplasm</location>
    </subcellularLocation>
    <subcellularLocation>
        <location evidence="1">Nucleus</location>
    </subcellularLocation>
    <text evidence="1">Shuttles between the nucleus and the cytoplasm by a nuclear localization signal (NLS) and a CRM1-dependent nuclear export.</text>
</comment>
<comment type="tissue specificity">
    <text evidence="3">Highly expressed in lymph node, thymus followed by liver, brain, muscle, kidney, gastrointestinal and reproductive tract.</text>
</comment>
<comment type="PTM">
    <text evidence="1">Phosphorylated at Ser-36 and Ser-40 by IKKA/CHUK and IKKB/IKBKB; disables inhibition of NF-kappa-B DNA-binding activity. Phosphorylation at positions 36 and 40 is prerequisite to polyubiquitination and subsequent degradation.</text>
</comment>
<comment type="PTM">
    <text evidence="1">Monoubiquitinated at Lys-21 following phosphorylation at Ser-36 and Ser-40. The resulting polyubiquitination leads to protein degradation.</text>
</comment>
<comment type="PTM">
    <text evidence="1">Hydroxylated by HIF1AN.</text>
</comment>
<comment type="similarity">
    <text evidence="5">Belongs to the NF-kappa-B inhibitor family.</text>
</comment>
<sequence length="318" mass="35399">MLSAHRPAEPPAVEGCEPPRKERQGGLLPPDDRHDSGLDSMKEEEYRQLVRELEDIRLQPREPPARPHAWAQQLTEDGDTFLHLAIIHEEKALSLEVIRQAAGDAAFLNFQNNLSQTPLHLAVITDQAEIAEHLLKAGCDLDVRDFRGNTPLHIACQQGSLRSVSVLTQHCQPHHLLAVLQATNYNGHTCLHLASIQGYLAVVEYLLSLGADVNAQEPCNGRTALHLAVDLQNSDLVSLLVKHGPDVNKVTYQGYSPYQLTWGRDNASIQEQLKLLTTADLQILPESEDEESSESEPEFTEDELMYDDCCIGGRQLTF</sequence>
<organism>
    <name type="scientific">Gallus gallus</name>
    <name type="common">Chicken</name>
    <dbReference type="NCBI Taxonomy" id="9031"/>
    <lineage>
        <taxon>Eukaryota</taxon>
        <taxon>Metazoa</taxon>
        <taxon>Chordata</taxon>
        <taxon>Craniata</taxon>
        <taxon>Vertebrata</taxon>
        <taxon>Euteleostomi</taxon>
        <taxon>Archelosauria</taxon>
        <taxon>Archosauria</taxon>
        <taxon>Dinosauria</taxon>
        <taxon>Saurischia</taxon>
        <taxon>Theropoda</taxon>
        <taxon>Coelurosauria</taxon>
        <taxon>Aves</taxon>
        <taxon>Neognathae</taxon>
        <taxon>Galloanserae</taxon>
        <taxon>Galliformes</taxon>
        <taxon>Phasianidae</taxon>
        <taxon>Phasianinae</taxon>
        <taxon>Gallus</taxon>
    </lineage>
</organism>
<accession>Q91974</accession>
<gene>
    <name type="primary">NFKBIA</name>
    <name type="synonym">IKBA</name>
</gene>
<reference key="1">
    <citation type="journal article" date="1991" name="Science">
        <title>Rel-associated pp40: an inhibitor of the rel family of transcription factors.</title>
        <authorList>
            <person name="Davis N."/>
            <person name="Ghosh S."/>
            <person name="Simmons D.L."/>
            <person name="Tempst P."/>
            <person name="Liou H.-C."/>
            <person name="Baltimore D."/>
            <person name="Bose H.R. Jr."/>
        </authorList>
    </citation>
    <scope>NUCLEOTIDE SEQUENCE [MRNA]</scope>
    <scope>FUNCTION</scope>
    <scope>TISSUE SPECIFICITY</scope>
    <source>
        <tissue>Embryonic fibroblast</tissue>
    </source>
</reference>